<evidence type="ECO:0000255" key="1">
    <source>
        <dbReference type="HAMAP-Rule" id="MF_00409"/>
    </source>
</evidence>
<evidence type="ECO:0000256" key="2">
    <source>
        <dbReference type="SAM" id="MobiDB-lite"/>
    </source>
</evidence>
<feature type="chain" id="PRO_0000291211" description="Tetraacyldisaccharide 4'-kinase">
    <location>
        <begin position="1"/>
        <end position="332"/>
    </location>
</feature>
<feature type="region of interest" description="Disordered" evidence="2">
    <location>
        <begin position="84"/>
        <end position="113"/>
    </location>
</feature>
<feature type="compositionally biased region" description="Basic and acidic residues" evidence="2">
    <location>
        <begin position="102"/>
        <end position="112"/>
    </location>
</feature>
<feature type="binding site" evidence="1">
    <location>
        <begin position="60"/>
        <end position="67"/>
    </location>
    <ligand>
        <name>ATP</name>
        <dbReference type="ChEBI" id="CHEBI:30616"/>
    </ligand>
</feature>
<comment type="function">
    <text evidence="1">Transfers the gamma-phosphate of ATP to the 4'-position of a tetraacyldisaccharide 1-phosphate intermediate (termed DS-1-P) to form tetraacyldisaccharide 1,4'-bis-phosphate (lipid IVA).</text>
</comment>
<comment type="catalytic activity">
    <reaction evidence="1">
        <text>a lipid A disaccharide + ATP = a lipid IVA + ADP + H(+)</text>
        <dbReference type="Rhea" id="RHEA:67840"/>
        <dbReference type="ChEBI" id="CHEBI:15378"/>
        <dbReference type="ChEBI" id="CHEBI:30616"/>
        <dbReference type="ChEBI" id="CHEBI:176343"/>
        <dbReference type="ChEBI" id="CHEBI:176425"/>
        <dbReference type="ChEBI" id="CHEBI:456216"/>
        <dbReference type="EC" id="2.7.1.130"/>
    </reaction>
</comment>
<comment type="pathway">
    <text evidence="1">Glycolipid biosynthesis; lipid IV(A) biosynthesis; lipid IV(A) from (3R)-3-hydroxytetradecanoyl-[acyl-carrier-protein] and UDP-N-acetyl-alpha-D-glucosamine: step 6/6.</text>
</comment>
<comment type="similarity">
    <text evidence="1">Belongs to the LpxK family.</text>
</comment>
<reference key="1">
    <citation type="journal article" date="2006" name="J. Bacteriol.">
        <title>Comparative genomic evidence for a close relationship between the dimorphic prosthecate bacteria Hyphomonas neptunium and Caulobacter crescentus.</title>
        <authorList>
            <person name="Badger J.H."/>
            <person name="Hoover T.R."/>
            <person name="Brun Y.V."/>
            <person name="Weiner R.M."/>
            <person name="Laub M.T."/>
            <person name="Alexandre G."/>
            <person name="Mrazek J."/>
            <person name="Ren Q."/>
            <person name="Paulsen I.T."/>
            <person name="Nelson K.E."/>
            <person name="Khouri H.M."/>
            <person name="Radune D."/>
            <person name="Sosa J."/>
            <person name="Dodson R.J."/>
            <person name="Sullivan S.A."/>
            <person name="Rosovitz M.J."/>
            <person name="Madupu R."/>
            <person name="Brinkac L.M."/>
            <person name="Durkin A.S."/>
            <person name="Daugherty S.C."/>
            <person name="Kothari S.P."/>
            <person name="Giglio M.G."/>
            <person name="Zhou L."/>
            <person name="Haft D.H."/>
            <person name="Selengut J.D."/>
            <person name="Davidsen T.M."/>
            <person name="Yang Q."/>
            <person name="Zafar N."/>
            <person name="Ward N.L."/>
        </authorList>
    </citation>
    <scope>NUCLEOTIDE SEQUENCE [LARGE SCALE GENOMIC DNA]</scope>
    <source>
        <strain>ATCC 15444</strain>
    </source>
</reference>
<organism>
    <name type="scientific">Hyphomonas neptunium (strain ATCC 15444)</name>
    <dbReference type="NCBI Taxonomy" id="228405"/>
    <lineage>
        <taxon>Bacteria</taxon>
        <taxon>Pseudomonadati</taxon>
        <taxon>Pseudomonadota</taxon>
        <taxon>Alphaproteobacteria</taxon>
        <taxon>Hyphomonadales</taxon>
        <taxon>Hyphomonadaceae</taxon>
        <taxon>Hyphomonas</taxon>
    </lineage>
</organism>
<gene>
    <name evidence="1" type="primary">lpxK</name>
    <name type="ordered locus">HNE_0700</name>
</gene>
<sequence>MKAPYFWSADLDPKSREAAPLTRLLLTPFAMLYLWALRRKLAKARPEAAPVPVVCIGNLTAGGAGKTPVTEAIRNRIRSAGLRAASLSRGHGGAEPGPLKVDPARHTSRDVGDEPLLLAGSGEAWIGRKRPEAARAMAADGAEIILMDDGHQNPSLKKDLTLIVIDAGAPFGNGHVLPKGPLREKVPEGLARADAVILMGAGPVPPEVTASSLPVLRARLAPLAAPPPGPLVAFAGIGRPQKFFDSLAQAGGNVSDAVPFGDHHPYTKGDVQFLRSLAHDHGARLITTTKDHVRLPLDAQSEILAWPVTAVFEDTAALDAVLAPIFKRAGKP</sequence>
<proteinExistence type="inferred from homology"/>
<name>LPXK_HYPNA</name>
<dbReference type="EC" id="2.7.1.130" evidence="1"/>
<dbReference type="EMBL" id="CP000158">
    <property type="protein sequence ID" value="ABI77857.1"/>
    <property type="molecule type" value="Genomic_DNA"/>
</dbReference>
<dbReference type="RefSeq" id="WP_011645729.1">
    <property type="nucleotide sequence ID" value="NC_008358.1"/>
</dbReference>
<dbReference type="SMR" id="Q0C4B4"/>
<dbReference type="STRING" id="228405.HNE_0700"/>
<dbReference type="KEGG" id="hne:HNE_0700"/>
<dbReference type="eggNOG" id="COG1663">
    <property type="taxonomic scope" value="Bacteria"/>
</dbReference>
<dbReference type="HOGENOM" id="CLU_038816_0_0_5"/>
<dbReference type="UniPathway" id="UPA00359">
    <property type="reaction ID" value="UER00482"/>
</dbReference>
<dbReference type="Proteomes" id="UP000001959">
    <property type="component" value="Chromosome"/>
</dbReference>
<dbReference type="GO" id="GO:0005886">
    <property type="term" value="C:plasma membrane"/>
    <property type="evidence" value="ECO:0007669"/>
    <property type="project" value="TreeGrafter"/>
</dbReference>
<dbReference type="GO" id="GO:0005524">
    <property type="term" value="F:ATP binding"/>
    <property type="evidence" value="ECO:0007669"/>
    <property type="project" value="UniProtKB-UniRule"/>
</dbReference>
<dbReference type="GO" id="GO:0009029">
    <property type="term" value="F:tetraacyldisaccharide 4'-kinase activity"/>
    <property type="evidence" value="ECO:0007669"/>
    <property type="project" value="UniProtKB-UniRule"/>
</dbReference>
<dbReference type="GO" id="GO:0009245">
    <property type="term" value="P:lipid A biosynthetic process"/>
    <property type="evidence" value="ECO:0007669"/>
    <property type="project" value="UniProtKB-UniRule"/>
</dbReference>
<dbReference type="GO" id="GO:0009244">
    <property type="term" value="P:lipopolysaccharide core region biosynthetic process"/>
    <property type="evidence" value="ECO:0007669"/>
    <property type="project" value="TreeGrafter"/>
</dbReference>
<dbReference type="HAMAP" id="MF_00409">
    <property type="entry name" value="LpxK"/>
    <property type="match status" value="1"/>
</dbReference>
<dbReference type="InterPro" id="IPR003758">
    <property type="entry name" value="LpxK"/>
</dbReference>
<dbReference type="InterPro" id="IPR027417">
    <property type="entry name" value="P-loop_NTPase"/>
</dbReference>
<dbReference type="NCBIfam" id="TIGR00682">
    <property type="entry name" value="lpxK"/>
    <property type="match status" value="1"/>
</dbReference>
<dbReference type="PANTHER" id="PTHR42724">
    <property type="entry name" value="TETRAACYLDISACCHARIDE 4'-KINASE"/>
    <property type="match status" value="1"/>
</dbReference>
<dbReference type="PANTHER" id="PTHR42724:SF1">
    <property type="entry name" value="TETRAACYLDISACCHARIDE 4'-KINASE, MITOCHONDRIAL-RELATED"/>
    <property type="match status" value="1"/>
</dbReference>
<dbReference type="Pfam" id="PF02606">
    <property type="entry name" value="LpxK"/>
    <property type="match status" value="1"/>
</dbReference>
<dbReference type="SUPFAM" id="SSF52540">
    <property type="entry name" value="P-loop containing nucleoside triphosphate hydrolases"/>
    <property type="match status" value="1"/>
</dbReference>
<accession>Q0C4B4</accession>
<protein>
    <recommendedName>
        <fullName evidence="1">Tetraacyldisaccharide 4'-kinase</fullName>
        <ecNumber evidence="1">2.7.1.130</ecNumber>
    </recommendedName>
    <alternativeName>
        <fullName evidence="1">Lipid A 4'-kinase</fullName>
    </alternativeName>
</protein>
<keyword id="KW-0067">ATP-binding</keyword>
<keyword id="KW-0418">Kinase</keyword>
<keyword id="KW-0441">Lipid A biosynthesis</keyword>
<keyword id="KW-0444">Lipid biosynthesis</keyword>
<keyword id="KW-0443">Lipid metabolism</keyword>
<keyword id="KW-0547">Nucleotide-binding</keyword>
<keyword id="KW-1185">Reference proteome</keyword>
<keyword id="KW-0808">Transferase</keyword>